<comment type="function">
    <text evidence="1">Catalyzes the attachment of serine to tRNA(Ser). Is also able to aminoacylate tRNA(Sec) with serine, to form the misacylated tRNA L-seryl-tRNA(Sec), which will be further converted into selenocysteinyl-tRNA(Sec).</text>
</comment>
<comment type="catalytic activity">
    <reaction evidence="1">
        <text>tRNA(Ser) + L-serine + ATP = L-seryl-tRNA(Ser) + AMP + diphosphate + H(+)</text>
        <dbReference type="Rhea" id="RHEA:12292"/>
        <dbReference type="Rhea" id="RHEA-COMP:9669"/>
        <dbReference type="Rhea" id="RHEA-COMP:9703"/>
        <dbReference type="ChEBI" id="CHEBI:15378"/>
        <dbReference type="ChEBI" id="CHEBI:30616"/>
        <dbReference type="ChEBI" id="CHEBI:33019"/>
        <dbReference type="ChEBI" id="CHEBI:33384"/>
        <dbReference type="ChEBI" id="CHEBI:78442"/>
        <dbReference type="ChEBI" id="CHEBI:78533"/>
        <dbReference type="ChEBI" id="CHEBI:456215"/>
        <dbReference type="EC" id="6.1.1.11"/>
    </reaction>
</comment>
<comment type="catalytic activity">
    <reaction evidence="1">
        <text>tRNA(Sec) + L-serine + ATP = L-seryl-tRNA(Sec) + AMP + diphosphate + H(+)</text>
        <dbReference type="Rhea" id="RHEA:42580"/>
        <dbReference type="Rhea" id="RHEA-COMP:9742"/>
        <dbReference type="Rhea" id="RHEA-COMP:10128"/>
        <dbReference type="ChEBI" id="CHEBI:15378"/>
        <dbReference type="ChEBI" id="CHEBI:30616"/>
        <dbReference type="ChEBI" id="CHEBI:33019"/>
        <dbReference type="ChEBI" id="CHEBI:33384"/>
        <dbReference type="ChEBI" id="CHEBI:78442"/>
        <dbReference type="ChEBI" id="CHEBI:78533"/>
        <dbReference type="ChEBI" id="CHEBI:456215"/>
        <dbReference type="EC" id="6.1.1.11"/>
    </reaction>
</comment>
<comment type="pathway">
    <text evidence="1">Aminoacyl-tRNA biosynthesis; selenocysteinyl-tRNA(Sec) biosynthesis; L-seryl-tRNA(Sec) from L-serine and tRNA(Sec): step 1/1.</text>
</comment>
<comment type="subunit">
    <text evidence="1">Homodimer. The tRNA molecule binds across the dimer.</text>
</comment>
<comment type="subcellular location">
    <subcellularLocation>
        <location evidence="1">Cytoplasm</location>
    </subcellularLocation>
</comment>
<comment type="domain">
    <text evidence="1">Consists of two distinct domains, a catalytic core and a N-terminal extension that is involved in tRNA binding.</text>
</comment>
<comment type="similarity">
    <text evidence="1">Belongs to the class-II aminoacyl-tRNA synthetase family. Type-1 seryl-tRNA synthetase subfamily.</text>
</comment>
<gene>
    <name evidence="1" type="primary">serS</name>
    <name type="ordered locus">Sden_1747</name>
</gene>
<accession>Q12NE5</accession>
<evidence type="ECO:0000255" key="1">
    <source>
        <dbReference type="HAMAP-Rule" id="MF_00176"/>
    </source>
</evidence>
<organism>
    <name type="scientific">Shewanella denitrificans (strain OS217 / ATCC BAA-1090 / DSM 15013)</name>
    <dbReference type="NCBI Taxonomy" id="318161"/>
    <lineage>
        <taxon>Bacteria</taxon>
        <taxon>Pseudomonadati</taxon>
        <taxon>Pseudomonadota</taxon>
        <taxon>Gammaproteobacteria</taxon>
        <taxon>Alteromonadales</taxon>
        <taxon>Shewanellaceae</taxon>
        <taxon>Shewanella</taxon>
    </lineage>
</organism>
<reference key="1">
    <citation type="submission" date="2006-03" db="EMBL/GenBank/DDBJ databases">
        <title>Complete sequence of Shewanella denitrificans OS217.</title>
        <authorList>
            <consortium name="US DOE Joint Genome Institute"/>
            <person name="Copeland A."/>
            <person name="Lucas S."/>
            <person name="Lapidus A."/>
            <person name="Barry K."/>
            <person name="Detter J.C."/>
            <person name="Glavina del Rio T."/>
            <person name="Hammon N."/>
            <person name="Israni S."/>
            <person name="Dalin E."/>
            <person name="Tice H."/>
            <person name="Pitluck S."/>
            <person name="Brettin T."/>
            <person name="Bruce D."/>
            <person name="Han C."/>
            <person name="Tapia R."/>
            <person name="Gilna P."/>
            <person name="Kiss H."/>
            <person name="Schmutz J."/>
            <person name="Larimer F."/>
            <person name="Land M."/>
            <person name="Hauser L."/>
            <person name="Kyrpides N."/>
            <person name="Lykidis A."/>
            <person name="Richardson P."/>
        </authorList>
    </citation>
    <scope>NUCLEOTIDE SEQUENCE [LARGE SCALE GENOMIC DNA]</scope>
    <source>
        <strain>OS217 / ATCC BAA-1090 / DSM 15013</strain>
    </source>
</reference>
<proteinExistence type="inferred from homology"/>
<sequence>MLDPKFLRTELDATAERLASRGFALDTAHLSQLEETRKSLQVETEELQASRNAISKSIGQAKSRGEDVSAIMAQVGDLGSKLDAKKAELAELLHAINLIAMSTPNLPDESVPCGKDETENLEVRRWGTPRSFDFPVKDHLDLGEALGGLDFKSAVKITGSRFIVMKGQLARLNRALGQFMLDLHTQEHGYTETYVPLLVNEDSLLGTGQLPKFGEDLFHTKPATEEGQGLSLIPTAEVPLTNLVRDTIVEVSDLPLKFTAQTSCFRSEAGSYGRDTRGLIRQHQFEKVELVQIVKPEDSMQALEELTLHAEKVLQLLGLPYRTMLLCTGDMGFGASKTYDLEVWLPAQNTYREISSCSNMKDFQARRMQARYRNPEDNKPALLHTLNGSGLAVGRTLVAILENYQNADGSITVPDVLHKYMGGTTLIG</sequence>
<keyword id="KW-0030">Aminoacyl-tRNA synthetase</keyword>
<keyword id="KW-0067">ATP-binding</keyword>
<keyword id="KW-0963">Cytoplasm</keyword>
<keyword id="KW-0436">Ligase</keyword>
<keyword id="KW-0547">Nucleotide-binding</keyword>
<keyword id="KW-0648">Protein biosynthesis</keyword>
<keyword id="KW-1185">Reference proteome</keyword>
<dbReference type="EC" id="6.1.1.11" evidence="1"/>
<dbReference type="EMBL" id="CP000302">
    <property type="protein sequence ID" value="ABE55031.1"/>
    <property type="molecule type" value="Genomic_DNA"/>
</dbReference>
<dbReference type="RefSeq" id="WP_011496188.1">
    <property type="nucleotide sequence ID" value="NC_007954.1"/>
</dbReference>
<dbReference type="SMR" id="Q12NE5"/>
<dbReference type="STRING" id="318161.Sden_1747"/>
<dbReference type="KEGG" id="sdn:Sden_1747"/>
<dbReference type="eggNOG" id="COG0172">
    <property type="taxonomic scope" value="Bacteria"/>
</dbReference>
<dbReference type="HOGENOM" id="CLU_023797_1_1_6"/>
<dbReference type="OrthoDB" id="9804647at2"/>
<dbReference type="UniPathway" id="UPA00906">
    <property type="reaction ID" value="UER00895"/>
</dbReference>
<dbReference type="Proteomes" id="UP000001982">
    <property type="component" value="Chromosome"/>
</dbReference>
<dbReference type="GO" id="GO:0005737">
    <property type="term" value="C:cytoplasm"/>
    <property type="evidence" value="ECO:0007669"/>
    <property type="project" value="UniProtKB-SubCell"/>
</dbReference>
<dbReference type="GO" id="GO:0005524">
    <property type="term" value="F:ATP binding"/>
    <property type="evidence" value="ECO:0007669"/>
    <property type="project" value="UniProtKB-UniRule"/>
</dbReference>
<dbReference type="GO" id="GO:0004828">
    <property type="term" value="F:serine-tRNA ligase activity"/>
    <property type="evidence" value="ECO:0007669"/>
    <property type="project" value="UniProtKB-UniRule"/>
</dbReference>
<dbReference type="GO" id="GO:0016260">
    <property type="term" value="P:selenocysteine biosynthetic process"/>
    <property type="evidence" value="ECO:0007669"/>
    <property type="project" value="UniProtKB-UniRule"/>
</dbReference>
<dbReference type="GO" id="GO:0006434">
    <property type="term" value="P:seryl-tRNA aminoacylation"/>
    <property type="evidence" value="ECO:0007669"/>
    <property type="project" value="UniProtKB-UniRule"/>
</dbReference>
<dbReference type="CDD" id="cd00770">
    <property type="entry name" value="SerRS_core"/>
    <property type="match status" value="1"/>
</dbReference>
<dbReference type="Gene3D" id="3.30.930.10">
    <property type="entry name" value="Bira Bifunctional Protein, Domain 2"/>
    <property type="match status" value="1"/>
</dbReference>
<dbReference type="Gene3D" id="1.10.287.40">
    <property type="entry name" value="Serine-tRNA synthetase, tRNA binding domain"/>
    <property type="match status" value="1"/>
</dbReference>
<dbReference type="HAMAP" id="MF_00176">
    <property type="entry name" value="Ser_tRNA_synth_type1"/>
    <property type="match status" value="1"/>
</dbReference>
<dbReference type="InterPro" id="IPR002314">
    <property type="entry name" value="aa-tRNA-synt_IIb"/>
</dbReference>
<dbReference type="InterPro" id="IPR006195">
    <property type="entry name" value="aa-tRNA-synth_II"/>
</dbReference>
<dbReference type="InterPro" id="IPR045864">
    <property type="entry name" value="aa-tRNA-synth_II/BPL/LPL"/>
</dbReference>
<dbReference type="InterPro" id="IPR002317">
    <property type="entry name" value="Ser-tRNA-ligase_type_1"/>
</dbReference>
<dbReference type="InterPro" id="IPR015866">
    <property type="entry name" value="Ser-tRNA-synth_1_N"/>
</dbReference>
<dbReference type="InterPro" id="IPR042103">
    <property type="entry name" value="SerRS_1_N_sf"/>
</dbReference>
<dbReference type="InterPro" id="IPR033729">
    <property type="entry name" value="SerRS_core"/>
</dbReference>
<dbReference type="InterPro" id="IPR010978">
    <property type="entry name" value="tRNA-bd_arm"/>
</dbReference>
<dbReference type="NCBIfam" id="TIGR00414">
    <property type="entry name" value="serS"/>
    <property type="match status" value="1"/>
</dbReference>
<dbReference type="PANTHER" id="PTHR43697:SF1">
    <property type="entry name" value="SERINE--TRNA LIGASE"/>
    <property type="match status" value="1"/>
</dbReference>
<dbReference type="PANTHER" id="PTHR43697">
    <property type="entry name" value="SERYL-TRNA SYNTHETASE"/>
    <property type="match status" value="1"/>
</dbReference>
<dbReference type="Pfam" id="PF02403">
    <property type="entry name" value="Seryl_tRNA_N"/>
    <property type="match status" value="1"/>
</dbReference>
<dbReference type="Pfam" id="PF00587">
    <property type="entry name" value="tRNA-synt_2b"/>
    <property type="match status" value="1"/>
</dbReference>
<dbReference type="PIRSF" id="PIRSF001529">
    <property type="entry name" value="Ser-tRNA-synth_IIa"/>
    <property type="match status" value="1"/>
</dbReference>
<dbReference type="PRINTS" id="PR00981">
    <property type="entry name" value="TRNASYNTHSER"/>
</dbReference>
<dbReference type="SUPFAM" id="SSF55681">
    <property type="entry name" value="Class II aaRS and biotin synthetases"/>
    <property type="match status" value="1"/>
</dbReference>
<dbReference type="SUPFAM" id="SSF46589">
    <property type="entry name" value="tRNA-binding arm"/>
    <property type="match status" value="1"/>
</dbReference>
<dbReference type="PROSITE" id="PS50862">
    <property type="entry name" value="AA_TRNA_LIGASE_II"/>
    <property type="match status" value="1"/>
</dbReference>
<protein>
    <recommendedName>
        <fullName evidence="1">Serine--tRNA ligase</fullName>
        <ecNumber evidence="1">6.1.1.11</ecNumber>
    </recommendedName>
    <alternativeName>
        <fullName evidence="1">Seryl-tRNA synthetase</fullName>
        <shortName evidence="1">SerRS</shortName>
    </alternativeName>
    <alternativeName>
        <fullName evidence="1">Seryl-tRNA(Ser/Sec) synthetase</fullName>
    </alternativeName>
</protein>
<name>SYS_SHEDO</name>
<feature type="chain" id="PRO_1000019811" description="Serine--tRNA ligase">
    <location>
        <begin position="1"/>
        <end position="428"/>
    </location>
</feature>
<feature type="binding site" evidence="1">
    <location>
        <begin position="235"/>
        <end position="237"/>
    </location>
    <ligand>
        <name>L-serine</name>
        <dbReference type="ChEBI" id="CHEBI:33384"/>
    </ligand>
</feature>
<feature type="binding site" evidence="1">
    <location>
        <begin position="266"/>
        <end position="268"/>
    </location>
    <ligand>
        <name>ATP</name>
        <dbReference type="ChEBI" id="CHEBI:30616"/>
    </ligand>
</feature>
<feature type="binding site" evidence="1">
    <location>
        <position position="289"/>
    </location>
    <ligand>
        <name>L-serine</name>
        <dbReference type="ChEBI" id="CHEBI:33384"/>
    </ligand>
</feature>
<feature type="binding site" evidence="1">
    <location>
        <begin position="353"/>
        <end position="356"/>
    </location>
    <ligand>
        <name>ATP</name>
        <dbReference type="ChEBI" id="CHEBI:30616"/>
    </ligand>
</feature>
<feature type="binding site" evidence="1">
    <location>
        <position position="389"/>
    </location>
    <ligand>
        <name>L-serine</name>
        <dbReference type="ChEBI" id="CHEBI:33384"/>
    </ligand>
</feature>